<gene>
    <name evidence="2" type="primary">dgoD</name>
    <name type="ordered locus">SeHA_C4161</name>
</gene>
<proteinExistence type="inferred from homology"/>
<keyword id="KW-0456">Lyase</keyword>
<keyword id="KW-0460">Magnesium</keyword>
<keyword id="KW-0479">Metal-binding</keyword>
<feature type="chain" id="PRO_1000140389" description="D-galactonate dehydratase">
    <location>
        <begin position="1"/>
        <end position="382"/>
    </location>
</feature>
<feature type="active site" description="Proton donor" evidence="1">
    <location>
        <position position="185"/>
    </location>
</feature>
<feature type="active site" description="Proton acceptor" evidence="1">
    <location>
        <position position="285"/>
    </location>
</feature>
<feature type="binding site" evidence="2">
    <location>
        <position position="183"/>
    </location>
    <ligand>
        <name>Mg(2+)</name>
        <dbReference type="ChEBI" id="CHEBI:18420"/>
    </ligand>
</feature>
<feature type="binding site" evidence="2">
    <location>
        <position position="209"/>
    </location>
    <ligand>
        <name>Mg(2+)</name>
        <dbReference type="ChEBI" id="CHEBI:18420"/>
    </ligand>
</feature>
<feature type="binding site" evidence="2">
    <location>
        <position position="235"/>
    </location>
    <ligand>
        <name>Mg(2+)</name>
        <dbReference type="ChEBI" id="CHEBI:18420"/>
    </ligand>
</feature>
<feature type="site" description="Increases basicity of active site His" evidence="2">
    <location>
        <position position="258"/>
    </location>
</feature>
<feature type="site" description="Transition state stabilizer" evidence="2">
    <location>
        <position position="310"/>
    </location>
</feature>
<reference key="1">
    <citation type="journal article" date="2011" name="J. Bacteriol.">
        <title>Comparative genomics of 28 Salmonella enterica isolates: evidence for CRISPR-mediated adaptive sublineage evolution.</title>
        <authorList>
            <person name="Fricke W.F."/>
            <person name="Mammel M.K."/>
            <person name="McDermott P.F."/>
            <person name="Tartera C."/>
            <person name="White D.G."/>
            <person name="Leclerc J.E."/>
            <person name="Ravel J."/>
            <person name="Cebula T.A."/>
        </authorList>
    </citation>
    <scope>NUCLEOTIDE SEQUENCE [LARGE SCALE GENOMIC DNA]</scope>
    <source>
        <strain>SL476</strain>
    </source>
</reference>
<evidence type="ECO:0000250" key="1"/>
<evidence type="ECO:0000255" key="2">
    <source>
        <dbReference type="HAMAP-Rule" id="MF_01289"/>
    </source>
</evidence>
<organism>
    <name type="scientific">Salmonella heidelberg (strain SL476)</name>
    <dbReference type="NCBI Taxonomy" id="454169"/>
    <lineage>
        <taxon>Bacteria</taxon>
        <taxon>Pseudomonadati</taxon>
        <taxon>Pseudomonadota</taxon>
        <taxon>Gammaproteobacteria</taxon>
        <taxon>Enterobacterales</taxon>
        <taxon>Enterobacteriaceae</taxon>
        <taxon>Salmonella</taxon>
    </lineage>
</organism>
<name>DGOD_SALHS</name>
<accession>B4TA81</accession>
<comment type="function">
    <text evidence="2">Catalyzes the dehydration of D-galactonate to 2-keto-3-deoxy-D-galactonate.</text>
</comment>
<comment type="catalytic activity">
    <reaction evidence="2">
        <text>D-galactonate = 2-dehydro-3-deoxy-D-galactonate + H2O</text>
        <dbReference type="Rhea" id="RHEA:18649"/>
        <dbReference type="ChEBI" id="CHEBI:12931"/>
        <dbReference type="ChEBI" id="CHEBI:15377"/>
        <dbReference type="ChEBI" id="CHEBI:57989"/>
        <dbReference type="EC" id="4.2.1.6"/>
    </reaction>
</comment>
<comment type="cofactor">
    <cofactor evidence="2">
        <name>Mg(2+)</name>
        <dbReference type="ChEBI" id="CHEBI:18420"/>
    </cofactor>
    <text evidence="2">Binds 1 Mg(2+) ion per subunit.</text>
</comment>
<comment type="pathway">
    <text evidence="2">Carbohydrate acid metabolism; D-galactonate degradation; D-glyceraldehyde 3-phosphate and pyruvate from D-galactonate: step 1/3.</text>
</comment>
<comment type="miscellaneous">
    <text evidence="2">Reaction proceeds via an anti dehydration.</text>
</comment>
<comment type="similarity">
    <text evidence="2">Belongs to the mandelate racemase/muconate lactonizing enzyme family. GalD subfamily.</text>
</comment>
<protein>
    <recommendedName>
        <fullName evidence="2">D-galactonate dehydratase</fullName>
        <shortName evidence="2">GalD</shortName>
        <ecNumber evidence="2">4.2.1.6</ecNumber>
    </recommendedName>
</protein>
<dbReference type="EC" id="4.2.1.6" evidence="2"/>
<dbReference type="EMBL" id="CP001120">
    <property type="protein sequence ID" value="ACF67521.1"/>
    <property type="molecule type" value="Genomic_DNA"/>
</dbReference>
<dbReference type="RefSeq" id="WP_000704735.1">
    <property type="nucleotide sequence ID" value="NC_011083.1"/>
</dbReference>
<dbReference type="SMR" id="B4TA81"/>
<dbReference type="KEGG" id="seh:SeHA_C4161"/>
<dbReference type="HOGENOM" id="CLU_030273_3_2_6"/>
<dbReference type="UniPathway" id="UPA00081">
    <property type="reaction ID" value="UER00518"/>
</dbReference>
<dbReference type="Proteomes" id="UP000001866">
    <property type="component" value="Chromosome"/>
</dbReference>
<dbReference type="GO" id="GO:0008869">
    <property type="term" value="F:galactonate dehydratase activity"/>
    <property type="evidence" value="ECO:0007669"/>
    <property type="project" value="UniProtKB-UniRule"/>
</dbReference>
<dbReference type="GO" id="GO:0000287">
    <property type="term" value="F:magnesium ion binding"/>
    <property type="evidence" value="ECO:0007669"/>
    <property type="project" value="UniProtKB-UniRule"/>
</dbReference>
<dbReference type="GO" id="GO:0009063">
    <property type="term" value="P:amino acid catabolic process"/>
    <property type="evidence" value="ECO:0007669"/>
    <property type="project" value="InterPro"/>
</dbReference>
<dbReference type="GO" id="GO:0034194">
    <property type="term" value="P:D-galactonate catabolic process"/>
    <property type="evidence" value="ECO:0007669"/>
    <property type="project" value="UniProtKB-UniRule"/>
</dbReference>
<dbReference type="CDD" id="cd03325">
    <property type="entry name" value="D-galactonate_dehydratase"/>
    <property type="match status" value="1"/>
</dbReference>
<dbReference type="FunFam" id="3.20.20.120:FF:000008">
    <property type="entry name" value="D-galactonate dehydratase"/>
    <property type="match status" value="1"/>
</dbReference>
<dbReference type="FunFam" id="3.30.390.10:FF:000003">
    <property type="entry name" value="D-galactonate dehydratase"/>
    <property type="match status" value="1"/>
</dbReference>
<dbReference type="Gene3D" id="3.20.20.120">
    <property type="entry name" value="Enolase-like C-terminal domain"/>
    <property type="match status" value="1"/>
</dbReference>
<dbReference type="Gene3D" id="3.30.390.10">
    <property type="entry name" value="Enolase-like, N-terminal domain"/>
    <property type="match status" value="1"/>
</dbReference>
<dbReference type="HAMAP" id="MF_01289">
    <property type="entry name" value="Galacton_dehydrat"/>
    <property type="match status" value="1"/>
</dbReference>
<dbReference type="InterPro" id="IPR034593">
    <property type="entry name" value="DgoD-like"/>
</dbReference>
<dbReference type="InterPro" id="IPR036849">
    <property type="entry name" value="Enolase-like_C_sf"/>
</dbReference>
<dbReference type="InterPro" id="IPR029017">
    <property type="entry name" value="Enolase-like_N"/>
</dbReference>
<dbReference type="InterPro" id="IPR029065">
    <property type="entry name" value="Enolase_C-like"/>
</dbReference>
<dbReference type="InterPro" id="IPR023592">
    <property type="entry name" value="Galactonate_deHydtase"/>
</dbReference>
<dbReference type="InterPro" id="IPR018110">
    <property type="entry name" value="Mandel_Rmase/mucon_lact_enz_CS"/>
</dbReference>
<dbReference type="InterPro" id="IPR013342">
    <property type="entry name" value="Mandelate_racemase_C"/>
</dbReference>
<dbReference type="InterPro" id="IPR013341">
    <property type="entry name" value="Mandelate_racemase_N_dom"/>
</dbReference>
<dbReference type="NCBIfam" id="NF010624">
    <property type="entry name" value="PRK14017.1"/>
    <property type="match status" value="1"/>
</dbReference>
<dbReference type="PANTHER" id="PTHR48080:SF2">
    <property type="entry name" value="D-GALACTONATE DEHYDRATASE"/>
    <property type="match status" value="1"/>
</dbReference>
<dbReference type="PANTHER" id="PTHR48080">
    <property type="entry name" value="D-GALACTONATE DEHYDRATASE-RELATED"/>
    <property type="match status" value="1"/>
</dbReference>
<dbReference type="Pfam" id="PF13378">
    <property type="entry name" value="MR_MLE_C"/>
    <property type="match status" value="1"/>
</dbReference>
<dbReference type="Pfam" id="PF02746">
    <property type="entry name" value="MR_MLE_N"/>
    <property type="match status" value="1"/>
</dbReference>
<dbReference type="SFLD" id="SFLDF00003">
    <property type="entry name" value="D-galactonate_dehydratase"/>
    <property type="match status" value="1"/>
</dbReference>
<dbReference type="SFLD" id="SFLDS00001">
    <property type="entry name" value="Enolase"/>
    <property type="match status" value="1"/>
</dbReference>
<dbReference type="SMART" id="SM00922">
    <property type="entry name" value="MR_MLE"/>
    <property type="match status" value="1"/>
</dbReference>
<dbReference type="SUPFAM" id="SSF51604">
    <property type="entry name" value="Enolase C-terminal domain-like"/>
    <property type="match status" value="1"/>
</dbReference>
<dbReference type="SUPFAM" id="SSF54826">
    <property type="entry name" value="Enolase N-terminal domain-like"/>
    <property type="match status" value="1"/>
</dbReference>
<dbReference type="PROSITE" id="PS00908">
    <property type="entry name" value="MR_MLE_1"/>
    <property type="match status" value="1"/>
</dbReference>
<dbReference type="PROSITE" id="PS00909">
    <property type="entry name" value="MR_MLE_2"/>
    <property type="match status" value="1"/>
</dbReference>
<sequence>MKITHITTYRLPPRWMFLKIETDEGVVGWGEPVIEGRARTVEAAVHEFADYLIGKDPARINDLWQVMYRAGFYRGGPIMMSAIAGIDQALWDIKGKVLNAPVWQLMGGLVRDKIKAYSWVGGDRPADVIDGIEKLRGIGFDTFKLNGCEEMGVIDNSRAVDAAVNTVAQIREAFGSEIEFGLDFHGRVSAPMAKVLIKELEPYRPLFIEEPVLAEQAEYYPRLAAQTHIPIAAGERMFSRFEFKRVLDAGGLAILQPDLSHAGGITECYKIAGMAEAYDVALAPHCPLGPIALAACLHIDFVSRNAVFQEQSMGIHYNKGAELLDFVKNKEDFSMDGGFFKPLTKPGLGVDIDEARVIELSKSAPDWRNPLWRHADGSVAEW</sequence>